<name>ENP1_YEAST</name>
<sequence length="483" mass="55137">MARASSTKARKQRHDPLLKDLDAAQGTLKKINKKKLAQNDAANHDAANEEDGYIDSKASRKILQLAKEQQDEIEGEELAESERNKQFEARFTTMSYDDEDEDEDEDEEAFGEDISDFEPEGDYKEEEEIVEIDEEDAAMFEQYFKKSDDFNSLSGSYNLADKIMASIREKESQVEDMQDDEPLANEQNTSRGNISSGLKSGEGVALPEKVIKAYTTVGSILKTWTHGKLPKLFKVIPSLRNWQDVIYVTNPEEWSPHVVYEATKLFVSNLTAKESQKFINLILLERFRDNIETSEDHSLNYHIYRAVKKSLYKPSAFFKGFLFPLVETGCNVREATIAGSVLAKVSVPALHSSAALSYLLRLPFSPPTTVFIKILLDKKYALPYQTVDDCVYYFMRFRILDDGSNGEDATRVLPVIWHKAFLTFAQRYKNDITQDQRDFLLETVRQRGHKDIGPEIRRELLAGASREFVDPQEANDDLMIDVN</sequence>
<protein>
    <recommendedName>
        <fullName>Essential nuclear protein 1</fullName>
    </recommendedName>
</protein>
<feature type="chain" id="PRO_0000186118" description="Essential nuclear protein 1">
    <location>
        <begin position="1"/>
        <end position="483"/>
    </location>
</feature>
<feature type="region of interest" description="Disordered" evidence="1">
    <location>
        <begin position="1"/>
        <end position="21"/>
    </location>
</feature>
<feature type="region of interest" description="Disordered" evidence="1">
    <location>
        <begin position="33"/>
        <end position="55"/>
    </location>
</feature>
<feature type="region of interest" description="Disordered" evidence="1">
    <location>
        <begin position="67"/>
        <end position="123"/>
    </location>
</feature>
<feature type="region of interest" description="Disordered" evidence="1">
    <location>
        <begin position="171"/>
        <end position="200"/>
    </location>
</feature>
<feature type="compositionally biased region" description="Acidic residues" evidence="1">
    <location>
        <begin position="96"/>
        <end position="123"/>
    </location>
</feature>
<feature type="compositionally biased region" description="Acidic residues" evidence="1">
    <location>
        <begin position="174"/>
        <end position="183"/>
    </location>
</feature>
<feature type="compositionally biased region" description="Polar residues" evidence="1">
    <location>
        <begin position="185"/>
        <end position="198"/>
    </location>
</feature>
<feature type="modified residue" description="Phosphoserine; by ATM or ATR" evidence="6 7">
    <location>
        <position position="172"/>
    </location>
</feature>
<feature type="modified residue" description="Phosphoserine" evidence="7">
    <location>
        <position position="190"/>
    </location>
</feature>
<feature type="modified residue" description="Phosphoserine" evidence="6">
    <location>
        <position position="404"/>
    </location>
</feature>
<feature type="helix" evidence="8">
    <location>
        <begin position="208"/>
        <end position="221"/>
    </location>
</feature>
<feature type="helix" evidence="10">
    <location>
        <begin position="224"/>
        <end position="226"/>
    </location>
</feature>
<feature type="helix" evidence="8">
    <location>
        <begin position="231"/>
        <end position="234"/>
    </location>
</feature>
<feature type="helix" evidence="8">
    <location>
        <begin position="236"/>
        <end position="238"/>
    </location>
</feature>
<feature type="helix" evidence="8">
    <location>
        <begin position="242"/>
        <end position="248"/>
    </location>
</feature>
<feature type="helix" evidence="8">
    <location>
        <begin position="251"/>
        <end position="253"/>
    </location>
</feature>
<feature type="helix" evidence="8">
    <location>
        <begin position="256"/>
        <end position="269"/>
    </location>
</feature>
<feature type="helix" evidence="8">
    <location>
        <begin position="272"/>
        <end position="281"/>
    </location>
</feature>
<feature type="helix" evidence="8">
    <location>
        <begin position="283"/>
        <end position="293"/>
    </location>
</feature>
<feature type="strand" evidence="9">
    <location>
        <begin position="294"/>
        <end position="296"/>
    </location>
</feature>
<feature type="helix" evidence="8">
    <location>
        <begin position="301"/>
        <end position="310"/>
    </location>
</feature>
<feature type="strand" evidence="9">
    <location>
        <begin position="311"/>
        <end position="313"/>
    </location>
</feature>
<feature type="helix" evidence="8">
    <location>
        <begin position="314"/>
        <end position="320"/>
    </location>
</feature>
<feature type="helix" evidence="8">
    <location>
        <begin position="322"/>
        <end position="326"/>
    </location>
</feature>
<feature type="turn" evidence="8">
    <location>
        <begin position="327"/>
        <end position="329"/>
    </location>
</feature>
<feature type="helix" evidence="8">
    <location>
        <begin position="332"/>
        <end position="344"/>
    </location>
</feature>
<feature type="helix" evidence="8">
    <location>
        <begin position="349"/>
        <end position="360"/>
    </location>
</feature>
<feature type="helix" evidence="8">
    <location>
        <begin position="366"/>
        <end position="377"/>
    </location>
</feature>
<feature type="helix" evidence="8">
    <location>
        <begin position="384"/>
        <end position="395"/>
    </location>
</feature>
<feature type="turn" evidence="9">
    <location>
        <begin position="401"/>
        <end position="403"/>
    </location>
</feature>
<feature type="helix" evidence="8">
    <location>
        <begin position="407"/>
        <end position="409"/>
    </location>
</feature>
<feature type="helix" evidence="8">
    <location>
        <begin position="415"/>
        <end position="428"/>
    </location>
</feature>
<feature type="helix" evidence="8">
    <location>
        <begin position="429"/>
        <end position="431"/>
    </location>
</feature>
<feature type="helix" evidence="8">
    <location>
        <begin position="434"/>
        <end position="447"/>
    </location>
</feature>
<feature type="helix" evidence="8">
    <location>
        <begin position="452"/>
        <end position="461"/>
    </location>
</feature>
<organism>
    <name type="scientific">Saccharomyces cerevisiae (strain ATCC 204508 / S288c)</name>
    <name type="common">Baker's yeast</name>
    <dbReference type="NCBI Taxonomy" id="559292"/>
    <lineage>
        <taxon>Eukaryota</taxon>
        <taxon>Fungi</taxon>
        <taxon>Dikarya</taxon>
        <taxon>Ascomycota</taxon>
        <taxon>Saccharomycotina</taxon>
        <taxon>Saccharomycetes</taxon>
        <taxon>Saccharomycetales</taxon>
        <taxon>Saccharomycetaceae</taxon>
        <taxon>Saccharomyces</taxon>
    </lineage>
</organism>
<reference key="1">
    <citation type="journal article" date="1997" name="Gene">
        <title>ENP1, an essential gene encoding a nuclear protein that is highly conserved from yeast to humans.</title>
        <authorList>
            <person name="Roos J."/>
            <person name="Luz J.M."/>
            <person name="Centoducati S."/>
            <person name="Sternglanz R."/>
            <person name="Lennarz W.J."/>
        </authorList>
    </citation>
    <scope>NUCLEOTIDE SEQUENCE [GENOMIC DNA]</scope>
</reference>
<reference key="2">
    <citation type="journal article" date="1994" name="EMBO J.">
        <title>Complete DNA sequence of yeast chromosome II.</title>
        <authorList>
            <person name="Feldmann H."/>
            <person name="Aigle M."/>
            <person name="Aljinovic G."/>
            <person name="Andre B."/>
            <person name="Baclet M.C."/>
            <person name="Barthe C."/>
            <person name="Baur A."/>
            <person name="Becam A.-M."/>
            <person name="Biteau N."/>
            <person name="Boles E."/>
            <person name="Brandt T."/>
            <person name="Brendel M."/>
            <person name="Brueckner M."/>
            <person name="Bussereau F."/>
            <person name="Christiansen C."/>
            <person name="Contreras R."/>
            <person name="Crouzet M."/>
            <person name="Cziepluch C."/>
            <person name="Demolis N."/>
            <person name="Delaveau T."/>
            <person name="Doignon F."/>
            <person name="Domdey H."/>
            <person name="Duesterhus S."/>
            <person name="Dubois E."/>
            <person name="Dujon B."/>
            <person name="El Bakkoury M."/>
            <person name="Entian K.-D."/>
            <person name="Feuermann M."/>
            <person name="Fiers W."/>
            <person name="Fobo G.M."/>
            <person name="Fritz C."/>
            <person name="Gassenhuber J."/>
            <person name="Glansdorff N."/>
            <person name="Goffeau A."/>
            <person name="Grivell L.A."/>
            <person name="de Haan M."/>
            <person name="Hein C."/>
            <person name="Herbert C.J."/>
            <person name="Hollenberg C.P."/>
            <person name="Holmstroem K."/>
            <person name="Jacq C."/>
            <person name="Jacquet M."/>
            <person name="Jauniaux J.-C."/>
            <person name="Jonniaux J.-L."/>
            <person name="Kallesoee T."/>
            <person name="Kiesau P."/>
            <person name="Kirchrath L."/>
            <person name="Koetter P."/>
            <person name="Korol S."/>
            <person name="Liebl S."/>
            <person name="Logghe M."/>
            <person name="Lohan A.J.E."/>
            <person name="Louis E.J."/>
            <person name="Li Z.Y."/>
            <person name="Maat M.J."/>
            <person name="Mallet L."/>
            <person name="Mannhaupt G."/>
            <person name="Messenguy F."/>
            <person name="Miosga T."/>
            <person name="Molemans F."/>
            <person name="Mueller S."/>
            <person name="Nasr F."/>
            <person name="Obermaier B."/>
            <person name="Perea J."/>
            <person name="Pierard A."/>
            <person name="Piravandi E."/>
            <person name="Pohl F.M."/>
            <person name="Pohl T.M."/>
            <person name="Potier S."/>
            <person name="Proft M."/>
            <person name="Purnelle B."/>
            <person name="Ramezani Rad M."/>
            <person name="Rieger M."/>
            <person name="Rose M."/>
            <person name="Schaaff-Gerstenschlaeger I."/>
            <person name="Scherens B."/>
            <person name="Schwarzlose C."/>
            <person name="Skala J."/>
            <person name="Slonimski P.P."/>
            <person name="Smits P.H.M."/>
            <person name="Souciet J.-L."/>
            <person name="Steensma H.Y."/>
            <person name="Stucka R."/>
            <person name="Urrestarazu L.A."/>
            <person name="van der Aart Q.J.M."/>
            <person name="Van Dyck L."/>
            <person name="Vassarotti A."/>
            <person name="Vetter I."/>
            <person name="Vierendeels F."/>
            <person name="Vissers S."/>
            <person name="Wagner G."/>
            <person name="de Wergifosse P."/>
            <person name="Wolfe K.H."/>
            <person name="Zagulski M."/>
            <person name="Zimmermann F.K."/>
            <person name="Mewes H.-W."/>
            <person name="Kleine K."/>
        </authorList>
    </citation>
    <scope>NUCLEOTIDE SEQUENCE [LARGE SCALE GENOMIC DNA]</scope>
    <source>
        <strain>ATCC 204508 / S288c</strain>
    </source>
</reference>
<reference key="3">
    <citation type="journal article" date="2014" name="G3 (Bethesda)">
        <title>The reference genome sequence of Saccharomyces cerevisiae: Then and now.</title>
        <authorList>
            <person name="Engel S.R."/>
            <person name="Dietrich F.S."/>
            <person name="Fisk D.G."/>
            <person name="Binkley G."/>
            <person name="Balakrishnan R."/>
            <person name="Costanzo M.C."/>
            <person name="Dwight S.S."/>
            <person name="Hitz B.C."/>
            <person name="Karra K."/>
            <person name="Nash R.S."/>
            <person name="Weng S."/>
            <person name="Wong E.D."/>
            <person name="Lloyd P."/>
            <person name="Skrzypek M.S."/>
            <person name="Miyasato S.R."/>
            <person name="Simison M."/>
            <person name="Cherry J.M."/>
        </authorList>
    </citation>
    <scope>GENOME REANNOTATION</scope>
    <source>
        <strain>ATCC 204508 / S288c</strain>
    </source>
</reference>
<reference key="4">
    <citation type="journal article" date="2003" name="EMBO J.">
        <title>The path from nucleolar 90S to cytoplasmic 40S pre-ribosomes.</title>
        <authorList>
            <person name="Schaefer T."/>
            <person name="Strauss D."/>
            <person name="Petfalski E."/>
            <person name="Tollervey D."/>
            <person name="Hurt E."/>
        </authorList>
    </citation>
    <scope>FUNCTION</scope>
    <scope>SUBCELLULAR LOCATION</scope>
</reference>
<reference key="5">
    <citation type="journal article" date="2003" name="Nature">
        <title>Global analysis of protein expression in yeast.</title>
        <authorList>
            <person name="Ghaemmaghami S."/>
            <person name="Huh W.-K."/>
            <person name="Bower K."/>
            <person name="Howson R.W."/>
            <person name="Belle A."/>
            <person name="Dephoure N."/>
            <person name="O'Shea E.K."/>
            <person name="Weissman J.S."/>
        </authorList>
    </citation>
    <scope>LEVEL OF PROTEIN EXPRESSION [LARGE SCALE ANALYSIS]</scope>
</reference>
<reference key="6">
    <citation type="journal article" date="2005" name="J. Biol. Chem.">
        <title>Specific role for yeast homologs of the Diamond Blackfan anemia-associated Rps19 protein in ribosome synthesis.</title>
        <authorList>
            <person name="Leger-Silvestre I."/>
            <person name="Caffrey J.M."/>
            <person name="Dawaliby R."/>
            <person name="Alvarez-Arias D.A."/>
            <person name="Gas N."/>
            <person name="Bertolone S.J."/>
            <person name="Gleizes P.E."/>
            <person name="Ellis S.R."/>
        </authorList>
    </citation>
    <scope>FUNCTION</scope>
    <scope>SUBCELLULAR LOCATION</scope>
</reference>
<reference key="7">
    <citation type="journal article" date="2008" name="Mol. Cell. Proteomics">
        <title>A multidimensional chromatography technology for in-depth phosphoproteome analysis.</title>
        <authorList>
            <person name="Albuquerque C.P."/>
            <person name="Smolka M.B."/>
            <person name="Payne S.H."/>
            <person name="Bafna V."/>
            <person name="Eng J."/>
            <person name="Zhou H."/>
        </authorList>
    </citation>
    <scope>PHOSPHORYLATION [LARGE SCALE ANALYSIS] AT SER-172 AND SER-404</scope>
    <scope>IDENTIFICATION BY MASS SPECTROMETRY [LARGE SCALE ANALYSIS]</scope>
</reference>
<reference key="8">
    <citation type="journal article" date="2009" name="Science">
        <title>Global analysis of Cdk1 substrate phosphorylation sites provides insights into evolution.</title>
        <authorList>
            <person name="Holt L.J."/>
            <person name="Tuch B.B."/>
            <person name="Villen J."/>
            <person name="Johnson A.D."/>
            <person name="Gygi S.P."/>
            <person name="Morgan D.O."/>
        </authorList>
    </citation>
    <scope>PHOSPHORYLATION [LARGE SCALE ANALYSIS] AT SER-172 AND SER-190</scope>
    <scope>IDENTIFICATION BY MASS SPECTROMETRY [LARGE SCALE ANALYSIS]</scope>
</reference>
<comment type="function">
    <text evidence="2 4">Required for normal export of the pre-40S particles from the nucleus to the cytoplasm. Its subcellular location and association with pre-40S subunit shifts from mixed cytoplasm/nucleus to all nuclear in RPS19 disruptions, suggesting it acts after the ribosomal protein.</text>
</comment>
<comment type="interaction">
    <interactant intactId="EBI-6482">
        <id>P38333</id>
    </interactant>
    <interactant intactId="EBI-5844">
        <id>P36009</id>
        <label>DHR2</label>
    </interactant>
    <organismsDiffer>false</organismsDiffer>
    <experiments>2</experiments>
</comment>
<comment type="interaction">
    <interactant intactId="EBI-6482">
        <id>P38333</id>
    </interactant>
    <interactant intactId="EBI-9237">
        <id>P32899</id>
        <label>IMP3</label>
    </interactant>
    <organismsDiffer>false</organismsDiffer>
    <experiments>5</experiments>
</comment>
<comment type="interaction">
    <interactant intactId="EBI-6482">
        <id>P38333</id>
    </interactant>
    <interactant intactId="EBI-9243">
        <id>P53941</id>
        <label>IMP4</label>
    </interactant>
    <organismsDiffer>false</organismsDiffer>
    <experiments>7</experiments>
</comment>
<comment type="interaction">
    <interactant intactId="EBI-6482">
        <id>P38333</id>
    </interactant>
    <interactant intactId="EBI-9152">
        <id>P38217</id>
        <label>KAP104</label>
    </interactant>
    <organismsDiffer>false</organismsDiffer>
    <experiments>2</experiments>
</comment>
<comment type="interaction">
    <interactant intactId="EBI-6482">
        <id>P38333</id>
    </interactant>
    <interactant intactId="EBI-21773">
        <id>P25586</id>
        <label>KRR1</label>
    </interactant>
    <organismsDiffer>false</organismsDiffer>
    <experiments>6</experiments>
</comment>
<comment type="interaction">
    <interactant intactId="EBI-6482">
        <id>P38333</id>
    </interactant>
    <interactant intactId="EBI-6838">
        <id>P15646</id>
        <label>NOP1</label>
    </interactant>
    <organismsDiffer>false</organismsDiffer>
    <experiments>4</experiments>
</comment>
<comment type="interaction">
    <interactant intactId="EBI-6482">
        <id>P38333</id>
    </interactant>
    <interactant intactId="EBI-35157">
        <id>Q99207</id>
        <label>NOP14</label>
    </interactant>
    <organismsDiffer>false</organismsDiffer>
    <experiments>11</experiments>
</comment>
<comment type="interaction">
    <interactant intactId="EBI-6482">
        <id>P38333</id>
    </interactant>
    <interactant intactId="EBI-31770">
        <id>Q12481</id>
        <label>RRP36</label>
    </interactant>
    <organismsDiffer>false</organismsDiffer>
    <experiments>2</experiments>
</comment>
<comment type="interaction">
    <interactant intactId="EBI-6482">
        <id>P38333</id>
    </interactant>
    <interactant intactId="EBI-23221">
        <id>P53251</id>
        <label>SLX9</label>
    </interactant>
    <organismsDiffer>false</organismsDiffer>
    <experiments>4</experiments>
</comment>
<comment type="interaction">
    <interactant intactId="EBI-6482">
        <id>P38333</id>
    </interactant>
    <interactant intactId="EBI-359">
        <id>Q06078</id>
        <label>UTP21</label>
    </interactant>
    <organismsDiffer>false</organismsDiffer>
    <experiments>4</experiments>
</comment>
<comment type="interaction">
    <interactant intactId="EBI-6482">
        <id>P38333</id>
    </interactant>
    <interactant intactId="EBI-1878">
        <id>P53254</id>
        <label>UTP22</label>
    </interactant>
    <organismsDiffer>false</organismsDiffer>
    <experiments>10</experiments>
</comment>
<comment type="subcellular location">
    <subcellularLocation>
        <location>Cytoplasm</location>
    </subcellularLocation>
    <subcellularLocation>
        <location>Nucleus</location>
        <location>Nucleolus</location>
    </subcellularLocation>
</comment>
<comment type="miscellaneous">
    <text evidence="3">Present with 21600 molecules/cell in log phase SD medium.</text>
</comment>
<comment type="similarity">
    <text evidence="5">Belongs to the bystin family.</text>
</comment>
<proteinExistence type="evidence at protein level"/>
<gene>
    <name type="primary">ENP1</name>
    <name type="synonym">MEG1</name>
    <name type="ordered locus">YBR247C</name>
    <name type="ORF">YBR1635</name>
</gene>
<evidence type="ECO:0000256" key="1">
    <source>
        <dbReference type="SAM" id="MobiDB-lite"/>
    </source>
</evidence>
<evidence type="ECO:0000269" key="2">
    <source>
    </source>
</evidence>
<evidence type="ECO:0000269" key="3">
    <source>
    </source>
</evidence>
<evidence type="ECO:0000269" key="4">
    <source>
    </source>
</evidence>
<evidence type="ECO:0000305" key="5"/>
<evidence type="ECO:0007744" key="6">
    <source>
    </source>
</evidence>
<evidence type="ECO:0007744" key="7">
    <source>
    </source>
</evidence>
<evidence type="ECO:0007829" key="8">
    <source>
        <dbReference type="PDB" id="5WWO"/>
    </source>
</evidence>
<evidence type="ECO:0007829" key="9">
    <source>
        <dbReference type="PDB" id="6FAI"/>
    </source>
</evidence>
<evidence type="ECO:0007829" key="10">
    <source>
        <dbReference type="PDB" id="8C00"/>
    </source>
</evidence>
<keyword id="KW-0002">3D-structure</keyword>
<keyword id="KW-0963">Cytoplasm</keyword>
<keyword id="KW-0539">Nucleus</keyword>
<keyword id="KW-0597">Phosphoprotein</keyword>
<keyword id="KW-1185">Reference proteome</keyword>
<keyword id="KW-0690">Ribosome biogenesis</keyword>
<dbReference type="EMBL" id="U50779">
    <property type="protein sequence ID" value="AAC49647.1"/>
    <property type="molecule type" value="Genomic_DNA"/>
</dbReference>
<dbReference type="EMBL" id="Z36116">
    <property type="protein sequence ID" value="CAA85210.1"/>
    <property type="molecule type" value="Genomic_DNA"/>
</dbReference>
<dbReference type="EMBL" id="BK006936">
    <property type="protein sequence ID" value="DAA07363.1"/>
    <property type="molecule type" value="Genomic_DNA"/>
</dbReference>
<dbReference type="PIR" id="S46124">
    <property type="entry name" value="S46124"/>
</dbReference>
<dbReference type="RefSeq" id="NP_009806.3">
    <property type="nucleotide sequence ID" value="NM_001178595.3"/>
</dbReference>
<dbReference type="PDB" id="5WLC">
    <property type="method" value="EM"/>
    <property type="resolution" value="3.80 A"/>
    <property type="chains" value="SZ=1-483"/>
</dbReference>
<dbReference type="PDB" id="5WWO">
    <property type="method" value="X-ray"/>
    <property type="resolution" value="2.40 A"/>
    <property type="chains" value="A/B=121-483"/>
</dbReference>
<dbReference type="PDB" id="5WYJ">
    <property type="method" value="EM"/>
    <property type="resolution" value="8.70 A"/>
    <property type="chains" value="E3=1-483"/>
</dbReference>
<dbReference type="PDB" id="6EML">
    <property type="method" value="EM"/>
    <property type="resolution" value="3.60 A"/>
    <property type="chains" value="e=1-483"/>
</dbReference>
<dbReference type="PDB" id="6FAI">
    <property type="method" value="EM"/>
    <property type="resolution" value="3.40 A"/>
    <property type="chains" value="i=1-483"/>
</dbReference>
<dbReference type="PDB" id="6KE6">
    <property type="method" value="EM"/>
    <property type="resolution" value="3.40 A"/>
    <property type="chains" value="RS=1-483"/>
</dbReference>
<dbReference type="PDB" id="6LQP">
    <property type="method" value="EM"/>
    <property type="resolution" value="3.20 A"/>
    <property type="chains" value="RS=1-483"/>
</dbReference>
<dbReference type="PDB" id="6LQQ">
    <property type="method" value="EM"/>
    <property type="resolution" value="4.10 A"/>
    <property type="chains" value="RS=1-483"/>
</dbReference>
<dbReference type="PDB" id="6LQR">
    <property type="method" value="EM"/>
    <property type="resolution" value="8.60 A"/>
    <property type="chains" value="RS=1-483"/>
</dbReference>
<dbReference type="PDB" id="6LQS">
    <property type="method" value="EM"/>
    <property type="resolution" value="3.80 A"/>
    <property type="chains" value="RS=1-480"/>
</dbReference>
<dbReference type="PDB" id="6LQU">
    <property type="method" value="EM"/>
    <property type="resolution" value="3.70 A"/>
    <property type="chains" value="RS=1-483"/>
</dbReference>
<dbReference type="PDB" id="6LQV">
    <property type="method" value="EM"/>
    <property type="resolution" value="4.80 A"/>
    <property type="chains" value="RS=1-483"/>
</dbReference>
<dbReference type="PDB" id="6RBD">
    <property type="method" value="EM"/>
    <property type="resolution" value="3.47 A"/>
    <property type="chains" value="i=1-483"/>
</dbReference>
<dbReference type="PDB" id="6Y7C">
    <property type="method" value="EM"/>
    <property type="resolution" value="3.80 A"/>
    <property type="chains" value="i=1-483"/>
</dbReference>
<dbReference type="PDB" id="6ZQA">
    <property type="method" value="EM"/>
    <property type="resolution" value="4.40 A"/>
    <property type="chains" value="JH=1-483"/>
</dbReference>
<dbReference type="PDB" id="6ZQB">
    <property type="method" value="EM"/>
    <property type="resolution" value="3.90 A"/>
    <property type="chains" value="JH=1-483"/>
</dbReference>
<dbReference type="PDB" id="6ZQC">
    <property type="method" value="EM"/>
    <property type="resolution" value="3.80 A"/>
    <property type="chains" value="JH=1-483"/>
</dbReference>
<dbReference type="PDB" id="6ZQD">
    <property type="method" value="EM"/>
    <property type="resolution" value="3.80 A"/>
    <property type="chains" value="JH=1-483"/>
</dbReference>
<dbReference type="PDB" id="6ZQE">
    <property type="method" value="EM"/>
    <property type="resolution" value="7.10 A"/>
    <property type="chains" value="JH=1-483"/>
</dbReference>
<dbReference type="PDB" id="6ZQF">
    <property type="method" value="EM"/>
    <property type="resolution" value="4.90 A"/>
    <property type="chains" value="JH=1-483"/>
</dbReference>
<dbReference type="PDB" id="6ZQG">
    <property type="method" value="EM"/>
    <property type="resolution" value="3.50 A"/>
    <property type="chains" value="JH=1-483"/>
</dbReference>
<dbReference type="PDB" id="7AJT">
    <property type="method" value="EM"/>
    <property type="resolution" value="4.60 A"/>
    <property type="chains" value="JH=1-483"/>
</dbReference>
<dbReference type="PDB" id="7AJU">
    <property type="method" value="EM"/>
    <property type="resolution" value="3.80 A"/>
    <property type="chains" value="JH=1-483"/>
</dbReference>
<dbReference type="PDB" id="7D4I">
    <property type="method" value="EM"/>
    <property type="resolution" value="4.00 A"/>
    <property type="chains" value="RS=1-480"/>
</dbReference>
<dbReference type="PDB" id="7D5S">
    <property type="method" value="EM"/>
    <property type="resolution" value="4.60 A"/>
    <property type="chains" value="RS=1-483"/>
</dbReference>
<dbReference type="PDB" id="7D63">
    <property type="method" value="EM"/>
    <property type="resolution" value="12.30 A"/>
    <property type="chains" value="RS=1-480"/>
</dbReference>
<dbReference type="PDB" id="7SUK">
    <property type="method" value="EM"/>
    <property type="resolution" value="3.99 A"/>
    <property type="chains" value="SZ=205-465"/>
</dbReference>
<dbReference type="PDB" id="8C00">
    <property type="method" value="EM"/>
    <property type="resolution" value="2.90 A"/>
    <property type="chains" value="e=1-483"/>
</dbReference>
<dbReference type="PDB" id="8C01">
    <property type="method" value="EM"/>
    <property type="resolution" value="2.70 A"/>
    <property type="chains" value="e=1-483"/>
</dbReference>
<dbReference type="PDB" id="8CBJ">
    <property type="method" value="EM"/>
    <property type="resolution" value="3.80 A"/>
    <property type="chains" value="i=1-483"/>
</dbReference>
<dbReference type="PDBsum" id="5WLC"/>
<dbReference type="PDBsum" id="5WWO"/>
<dbReference type="PDBsum" id="5WYJ"/>
<dbReference type="PDBsum" id="6EML"/>
<dbReference type="PDBsum" id="6FAI"/>
<dbReference type="PDBsum" id="6KE6"/>
<dbReference type="PDBsum" id="6LQP"/>
<dbReference type="PDBsum" id="6LQQ"/>
<dbReference type="PDBsum" id="6LQR"/>
<dbReference type="PDBsum" id="6LQS"/>
<dbReference type="PDBsum" id="6LQU"/>
<dbReference type="PDBsum" id="6LQV"/>
<dbReference type="PDBsum" id="6RBD"/>
<dbReference type="PDBsum" id="6Y7C"/>
<dbReference type="PDBsum" id="6ZQA"/>
<dbReference type="PDBsum" id="6ZQB"/>
<dbReference type="PDBsum" id="6ZQC"/>
<dbReference type="PDBsum" id="6ZQD"/>
<dbReference type="PDBsum" id="6ZQE"/>
<dbReference type="PDBsum" id="6ZQF"/>
<dbReference type="PDBsum" id="6ZQG"/>
<dbReference type="PDBsum" id="7AJT"/>
<dbReference type="PDBsum" id="7AJU"/>
<dbReference type="PDBsum" id="7D4I"/>
<dbReference type="PDBsum" id="7D5S"/>
<dbReference type="PDBsum" id="7D63"/>
<dbReference type="PDBsum" id="7SUK"/>
<dbReference type="PDBsum" id="8C00"/>
<dbReference type="PDBsum" id="8C01"/>
<dbReference type="PDBsum" id="8CBJ"/>
<dbReference type="EMDB" id="EMD-0949"/>
<dbReference type="EMDB" id="EMD-0950"/>
<dbReference type="EMDB" id="EMD-0951"/>
<dbReference type="EMDB" id="EMD-0952"/>
<dbReference type="EMDB" id="EMD-0954"/>
<dbReference type="EMDB" id="EMD-0955"/>
<dbReference type="EMDB" id="EMD-10713"/>
<dbReference type="EMDB" id="EMD-11357"/>
<dbReference type="EMDB" id="EMD-11358"/>
<dbReference type="EMDB" id="EMD-11359"/>
<dbReference type="EMDB" id="EMD-11360"/>
<dbReference type="EMDB" id="EMD-11361"/>
<dbReference type="EMDB" id="EMD-11362"/>
<dbReference type="EMDB" id="EMD-11363"/>
<dbReference type="EMDB" id="EMD-11807"/>
<dbReference type="EMDB" id="EMD-11808"/>
<dbReference type="EMDB" id="EMD-16347"/>
<dbReference type="EMDB" id="EMD-16349"/>
<dbReference type="EMDB" id="EMD-25441"/>
<dbReference type="EMDB" id="EMD-30574"/>
<dbReference type="EMDB" id="EMD-30584"/>
<dbReference type="EMDB" id="EMD-30588"/>
<dbReference type="EMDB" id="EMD-4214"/>
<dbReference type="EMDB" id="EMD-4792"/>
<dbReference type="EMDB" id="EMD-6695"/>
<dbReference type="EMDB" id="EMD-8859"/>
<dbReference type="EMDB" id="EMD-9964"/>
<dbReference type="SMR" id="P38333"/>
<dbReference type="BioGRID" id="32942">
    <property type="interactions" value="434"/>
</dbReference>
<dbReference type="ComplexPortal" id="CPX-1604">
    <property type="entry name" value="Small ribosomal subunit processome"/>
</dbReference>
<dbReference type="DIP" id="DIP-6612N"/>
<dbReference type="FunCoup" id="P38333">
    <property type="interactions" value="1070"/>
</dbReference>
<dbReference type="IntAct" id="P38333">
    <property type="interactions" value="134"/>
</dbReference>
<dbReference type="MINT" id="P38333"/>
<dbReference type="STRING" id="4932.YBR247C"/>
<dbReference type="iPTMnet" id="P38333"/>
<dbReference type="PaxDb" id="4932-YBR247C"/>
<dbReference type="PeptideAtlas" id="P38333"/>
<dbReference type="EnsemblFungi" id="YBR247C_mRNA">
    <property type="protein sequence ID" value="YBR247C"/>
    <property type="gene ID" value="YBR247C"/>
</dbReference>
<dbReference type="GeneID" id="852549"/>
<dbReference type="KEGG" id="sce:YBR247C"/>
<dbReference type="AGR" id="SGD:S000000451"/>
<dbReference type="SGD" id="S000000451">
    <property type="gene designation" value="ENP1"/>
</dbReference>
<dbReference type="VEuPathDB" id="FungiDB:YBR247C"/>
<dbReference type="eggNOG" id="KOG3871">
    <property type="taxonomic scope" value="Eukaryota"/>
</dbReference>
<dbReference type="GeneTree" id="ENSGT00390000007241"/>
<dbReference type="HOGENOM" id="CLU_029727_0_1_1"/>
<dbReference type="InParanoid" id="P38333"/>
<dbReference type="OMA" id="TKLPVIW"/>
<dbReference type="OrthoDB" id="2192561at2759"/>
<dbReference type="BioCyc" id="YEAST:G3O-29175-MONOMER"/>
<dbReference type="BioGRID-ORCS" id="852549">
    <property type="hits" value="0 hits in 10 CRISPR screens"/>
</dbReference>
<dbReference type="CD-CODE" id="BDAE0F88">
    <property type="entry name" value="Nucleolus"/>
</dbReference>
<dbReference type="CD-CODE" id="E03F929F">
    <property type="entry name" value="Stress granule"/>
</dbReference>
<dbReference type="PRO" id="PR:P38333"/>
<dbReference type="Proteomes" id="UP000002311">
    <property type="component" value="Chromosome II"/>
</dbReference>
<dbReference type="RNAct" id="P38333">
    <property type="molecule type" value="protein"/>
</dbReference>
<dbReference type="GO" id="GO:0030686">
    <property type="term" value="C:90S preribosome"/>
    <property type="evidence" value="ECO:0000314"/>
    <property type="project" value="GO_Central"/>
</dbReference>
<dbReference type="GO" id="GO:0005737">
    <property type="term" value="C:cytoplasm"/>
    <property type="evidence" value="ECO:0000314"/>
    <property type="project" value="GO_Central"/>
</dbReference>
<dbReference type="GO" id="GO:0005730">
    <property type="term" value="C:nucleolus"/>
    <property type="evidence" value="ECO:0000314"/>
    <property type="project" value="GO_Central"/>
</dbReference>
<dbReference type="GO" id="GO:0005634">
    <property type="term" value="C:nucleus"/>
    <property type="evidence" value="ECO:0000314"/>
    <property type="project" value="SGD"/>
</dbReference>
<dbReference type="GO" id="GO:0030688">
    <property type="term" value="C:preribosome, small subunit precursor"/>
    <property type="evidence" value="ECO:0000314"/>
    <property type="project" value="GO_Central"/>
</dbReference>
<dbReference type="GO" id="GO:0032040">
    <property type="term" value="C:small-subunit processome"/>
    <property type="evidence" value="ECO:0000353"/>
    <property type="project" value="ComplexPortal"/>
</dbReference>
<dbReference type="GO" id="GO:0030515">
    <property type="term" value="F:snoRNA binding"/>
    <property type="evidence" value="ECO:0000314"/>
    <property type="project" value="SGD"/>
</dbReference>
<dbReference type="GO" id="GO:0000447">
    <property type="term" value="P:endonucleolytic cleavage in ITS1 to separate SSU-rRNA from 5.8S rRNA and LSU-rRNA from tricistronic rRNA transcript (SSU-rRNA, 5.8S rRNA, LSU-rRNA)"/>
    <property type="evidence" value="ECO:0000315"/>
    <property type="project" value="SGD"/>
</dbReference>
<dbReference type="GO" id="GO:0030490">
    <property type="term" value="P:maturation of SSU-rRNA"/>
    <property type="evidence" value="ECO:0000303"/>
    <property type="project" value="ComplexPortal"/>
</dbReference>
<dbReference type="GO" id="GO:0016973">
    <property type="term" value="P:poly(A)+ mRNA export from nucleus"/>
    <property type="evidence" value="ECO:0000315"/>
    <property type="project" value="SGD"/>
</dbReference>
<dbReference type="GO" id="GO:0006364">
    <property type="term" value="P:rRNA processing"/>
    <property type="evidence" value="ECO:0000315"/>
    <property type="project" value="SGD"/>
</dbReference>
<dbReference type="InterPro" id="IPR007955">
    <property type="entry name" value="Bystin"/>
</dbReference>
<dbReference type="PANTHER" id="PTHR12821">
    <property type="entry name" value="BYSTIN"/>
    <property type="match status" value="1"/>
</dbReference>
<dbReference type="PANTHER" id="PTHR12821:SF0">
    <property type="entry name" value="BYSTIN"/>
    <property type="match status" value="1"/>
</dbReference>
<dbReference type="Pfam" id="PF05291">
    <property type="entry name" value="Bystin"/>
    <property type="match status" value="1"/>
</dbReference>
<accession>P38333</accession>
<accession>D6VQP3</accession>